<feature type="chain" id="PRO_1000069667" description="Thymidine phosphorylase">
    <location>
        <begin position="1"/>
        <end position="443"/>
    </location>
</feature>
<accession>A6WRB7</accession>
<dbReference type="EC" id="2.4.2.4" evidence="1"/>
<dbReference type="EMBL" id="CP000753">
    <property type="protein sequence ID" value="ABS09356.1"/>
    <property type="molecule type" value="Genomic_DNA"/>
</dbReference>
<dbReference type="RefSeq" id="WP_012089877.1">
    <property type="nucleotide sequence ID" value="NC_009665.1"/>
</dbReference>
<dbReference type="SMR" id="A6WRB7"/>
<dbReference type="KEGG" id="sbm:Shew185_3229"/>
<dbReference type="HOGENOM" id="CLU_025040_0_1_6"/>
<dbReference type="UniPathway" id="UPA00578">
    <property type="reaction ID" value="UER00638"/>
</dbReference>
<dbReference type="GO" id="GO:0005829">
    <property type="term" value="C:cytosol"/>
    <property type="evidence" value="ECO:0007669"/>
    <property type="project" value="TreeGrafter"/>
</dbReference>
<dbReference type="GO" id="GO:0004645">
    <property type="term" value="F:1,4-alpha-oligoglucan phosphorylase activity"/>
    <property type="evidence" value="ECO:0007669"/>
    <property type="project" value="InterPro"/>
</dbReference>
<dbReference type="GO" id="GO:0009032">
    <property type="term" value="F:thymidine phosphorylase activity"/>
    <property type="evidence" value="ECO:0007669"/>
    <property type="project" value="UniProtKB-UniRule"/>
</dbReference>
<dbReference type="GO" id="GO:0006206">
    <property type="term" value="P:pyrimidine nucleobase metabolic process"/>
    <property type="evidence" value="ECO:0007669"/>
    <property type="project" value="InterPro"/>
</dbReference>
<dbReference type="GO" id="GO:0046104">
    <property type="term" value="P:thymidine metabolic process"/>
    <property type="evidence" value="ECO:0007669"/>
    <property type="project" value="UniProtKB-UniRule"/>
</dbReference>
<dbReference type="FunFam" id="3.40.1030.10:FF:000001">
    <property type="entry name" value="Thymidine phosphorylase"/>
    <property type="match status" value="1"/>
</dbReference>
<dbReference type="FunFam" id="3.90.1170.30:FF:000001">
    <property type="entry name" value="Thymidine phosphorylase"/>
    <property type="match status" value="1"/>
</dbReference>
<dbReference type="Gene3D" id="3.40.1030.10">
    <property type="entry name" value="Nucleoside phosphorylase/phosphoribosyltransferase catalytic domain"/>
    <property type="match status" value="1"/>
</dbReference>
<dbReference type="Gene3D" id="3.90.1170.30">
    <property type="entry name" value="Pyrimidine nucleoside phosphorylase-like, C-terminal domain"/>
    <property type="match status" value="1"/>
</dbReference>
<dbReference type="Gene3D" id="1.20.970.10">
    <property type="entry name" value="Transferase, Pyrimidine Nucleoside Phosphorylase, Chain C"/>
    <property type="match status" value="1"/>
</dbReference>
<dbReference type="HAMAP" id="MF_01628">
    <property type="entry name" value="Thymid_phosp"/>
    <property type="match status" value="1"/>
</dbReference>
<dbReference type="InterPro" id="IPR000312">
    <property type="entry name" value="Glycosyl_Trfase_fam3"/>
</dbReference>
<dbReference type="InterPro" id="IPR017459">
    <property type="entry name" value="Glycosyl_Trfase_fam3_N_dom"/>
</dbReference>
<dbReference type="InterPro" id="IPR036320">
    <property type="entry name" value="Glycosyl_Trfase_fam3_N_dom_sf"/>
</dbReference>
<dbReference type="InterPro" id="IPR035902">
    <property type="entry name" value="Nuc_phospho_transferase"/>
</dbReference>
<dbReference type="InterPro" id="IPR036566">
    <property type="entry name" value="PYNP-like_C_sf"/>
</dbReference>
<dbReference type="InterPro" id="IPR013102">
    <property type="entry name" value="PYNP_C"/>
</dbReference>
<dbReference type="InterPro" id="IPR018090">
    <property type="entry name" value="Pyrmidine_PPas_bac/euk"/>
</dbReference>
<dbReference type="InterPro" id="IPR017872">
    <property type="entry name" value="Pyrmidine_PPase_CS"/>
</dbReference>
<dbReference type="InterPro" id="IPR000053">
    <property type="entry name" value="Thymidine/pyrmidine_PPase"/>
</dbReference>
<dbReference type="InterPro" id="IPR013465">
    <property type="entry name" value="Thymidine_Pase"/>
</dbReference>
<dbReference type="NCBIfam" id="NF004490">
    <property type="entry name" value="PRK05820.1"/>
    <property type="match status" value="1"/>
</dbReference>
<dbReference type="NCBIfam" id="TIGR02643">
    <property type="entry name" value="T_phosphoryl"/>
    <property type="match status" value="1"/>
</dbReference>
<dbReference type="NCBIfam" id="TIGR02644">
    <property type="entry name" value="Y_phosphoryl"/>
    <property type="match status" value="1"/>
</dbReference>
<dbReference type="PANTHER" id="PTHR10515">
    <property type="entry name" value="THYMIDINE PHOSPHORYLASE"/>
    <property type="match status" value="1"/>
</dbReference>
<dbReference type="PANTHER" id="PTHR10515:SF0">
    <property type="entry name" value="THYMIDINE PHOSPHORYLASE"/>
    <property type="match status" value="1"/>
</dbReference>
<dbReference type="Pfam" id="PF02885">
    <property type="entry name" value="Glycos_trans_3N"/>
    <property type="match status" value="1"/>
</dbReference>
<dbReference type="Pfam" id="PF00591">
    <property type="entry name" value="Glycos_transf_3"/>
    <property type="match status" value="1"/>
</dbReference>
<dbReference type="Pfam" id="PF07831">
    <property type="entry name" value="PYNP_C"/>
    <property type="match status" value="1"/>
</dbReference>
<dbReference type="PIRSF" id="PIRSF000478">
    <property type="entry name" value="TP_PyNP"/>
    <property type="match status" value="1"/>
</dbReference>
<dbReference type="SMART" id="SM00941">
    <property type="entry name" value="PYNP_C"/>
    <property type="match status" value="1"/>
</dbReference>
<dbReference type="SUPFAM" id="SSF52418">
    <property type="entry name" value="Nucleoside phosphorylase/phosphoribosyltransferase catalytic domain"/>
    <property type="match status" value="1"/>
</dbReference>
<dbReference type="SUPFAM" id="SSF47648">
    <property type="entry name" value="Nucleoside phosphorylase/phosphoribosyltransferase N-terminal domain"/>
    <property type="match status" value="1"/>
</dbReference>
<dbReference type="SUPFAM" id="SSF54680">
    <property type="entry name" value="Pyrimidine nucleoside phosphorylase C-terminal domain"/>
    <property type="match status" value="1"/>
</dbReference>
<dbReference type="PROSITE" id="PS00647">
    <property type="entry name" value="THYMID_PHOSPHORYLASE"/>
    <property type="match status" value="1"/>
</dbReference>
<protein>
    <recommendedName>
        <fullName evidence="1">Thymidine phosphorylase</fullName>
        <ecNumber evidence="1">2.4.2.4</ecNumber>
    </recommendedName>
    <alternativeName>
        <fullName evidence="1">TdRPase</fullName>
    </alternativeName>
</protein>
<reference key="1">
    <citation type="submission" date="2007-07" db="EMBL/GenBank/DDBJ databases">
        <title>Complete sequence of chromosome of Shewanella baltica OS185.</title>
        <authorList>
            <consortium name="US DOE Joint Genome Institute"/>
            <person name="Copeland A."/>
            <person name="Lucas S."/>
            <person name="Lapidus A."/>
            <person name="Barry K."/>
            <person name="Glavina del Rio T."/>
            <person name="Dalin E."/>
            <person name="Tice H."/>
            <person name="Pitluck S."/>
            <person name="Sims D."/>
            <person name="Brettin T."/>
            <person name="Bruce D."/>
            <person name="Detter J.C."/>
            <person name="Han C."/>
            <person name="Schmutz J."/>
            <person name="Larimer F."/>
            <person name="Land M."/>
            <person name="Hauser L."/>
            <person name="Kyrpides N."/>
            <person name="Mikhailova N."/>
            <person name="Brettar I."/>
            <person name="Rodrigues J."/>
            <person name="Konstantinidis K."/>
            <person name="Tiedje J."/>
            <person name="Richardson P."/>
        </authorList>
    </citation>
    <scope>NUCLEOTIDE SEQUENCE [LARGE SCALE GENOMIC DNA]</scope>
    <source>
        <strain>OS185</strain>
    </source>
</reference>
<name>TYPH_SHEB8</name>
<comment type="function">
    <text evidence="1">The enzymes which catalyze the reversible phosphorolysis of pyrimidine nucleosides are involved in the degradation of these compounds and in their utilization as carbon and energy sources, or in the rescue of pyrimidine bases for nucleotide synthesis.</text>
</comment>
<comment type="catalytic activity">
    <reaction evidence="1">
        <text>thymidine + phosphate = 2-deoxy-alpha-D-ribose 1-phosphate + thymine</text>
        <dbReference type="Rhea" id="RHEA:16037"/>
        <dbReference type="ChEBI" id="CHEBI:17748"/>
        <dbReference type="ChEBI" id="CHEBI:17821"/>
        <dbReference type="ChEBI" id="CHEBI:43474"/>
        <dbReference type="ChEBI" id="CHEBI:57259"/>
        <dbReference type="EC" id="2.4.2.4"/>
    </reaction>
</comment>
<comment type="pathway">
    <text evidence="1">Pyrimidine metabolism; dTMP biosynthesis via salvage pathway; dTMP from thymine: step 1/2.</text>
</comment>
<comment type="subunit">
    <text evidence="1">Homodimer.</text>
</comment>
<comment type="similarity">
    <text evidence="1">Belongs to the thymidine/pyrimidine-nucleoside phosphorylase family.</text>
</comment>
<sequence length="443" mass="46921">MFLAQEIIRKKRNGLALSSEEIQFFVQGITTNSVSEGQIAALGMAVYFNDMNMDERIALTTAMRDSGTVLNWQSLGLNGPVIDKHSTGGVGDVISLMLGPMAAACGGYVPMISGRGLGHTGGTLDKFDAIQGYQTEPSSELFRKVVKEVGVAIIGQTGDLVPADKRFYSIRDNTATVESISLITASILSKKLACNLDALAMDVKVGSGAFMPTYEASEELARSIAAVANGAGTKTTALLTDMNQVLASCAGNAVEVKEAIDFLTGAYRNPRLYEVTMGLCAEMLLLGGLASNEADARAKLNRVLDNGRAAELFGKMVSGLGGPVDFVENYSKYLPQSQIIRPVFADMQGYAYSMDTRELGLAVVTLGGGRRKPGDALDYSVGLTQVCALGDKVDSSTPIAVIHAQSEAAFAEAELAVKKAIHIGETAPEKTPEIYAYIRASDL</sequence>
<organism>
    <name type="scientific">Shewanella baltica (strain OS185)</name>
    <dbReference type="NCBI Taxonomy" id="402882"/>
    <lineage>
        <taxon>Bacteria</taxon>
        <taxon>Pseudomonadati</taxon>
        <taxon>Pseudomonadota</taxon>
        <taxon>Gammaproteobacteria</taxon>
        <taxon>Alteromonadales</taxon>
        <taxon>Shewanellaceae</taxon>
        <taxon>Shewanella</taxon>
    </lineage>
</organism>
<gene>
    <name evidence="1" type="primary">deoA</name>
    <name type="ordered locus">Shew185_3229</name>
</gene>
<keyword id="KW-0328">Glycosyltransferase</keyword>
<keyword id="KW-0808">Transferase</keyword>
<evidence type="ECO:0000255" key="1">
    <source>
        <dbReference type="HAMAP-Rule" id="MF_01628"/>
    </source>
</evidence>
<proteinExistence type="inferred from homology"/>